<reference key="1">
    <citation type="submission" date="2001-12" db="EMBL/GenBank/DDBJ databases">
        <title>An efficacious vaccine for Photobacterium damsela subsp. piscicida.</title>
        <authorList>
            <person name="Thune R.L."/>
            <person name="Fernandez D.H."/>
            <person name="Hawke J.P."/>
            <person name="Miller R."/>
        </authorList>
    </citation>
    <scope>NUCLEOTIDE SEQUENCE [GENOMIC DNA]</scope>
</reference>
<name>AROA_PHODP</name>
<gene>
    <name evidence="1" type="primary">aroA</name>
</gene>
<comment type="function">
    <text evidence="1">Catalyzes the transfer of the enolpyruvyl moiety of phosphoenolpyruvate (PEP) to the 5-hydroxyl of shikimate-3-phosphate (S3P) to produce enolpyruvyl shikimate-3-phosphate and inorganic phosphate.</text>
</comment>
<comment type="catalytic activity">
    <reaction evidence="1">
        <text>3-phosphoshikimate + phosphoenolpyruvate = 5-O-(1-carboxyvinyl)-3-phosphoshikimate + phosphate</text>
        <dbReference type="Rhea" id="RHEA:21256"/>
        <dbReference type="ChEBI" id="CHEBI:43474"/>
        <dbReference type="ChEBI" id="CHEBI:57701"/>
        <dbReference type="ChEBI" id="CHEBI:58702"/>
        <dbReference type="ChEBI" id="CHEBI:145989"/>
        <dbReference type="EC" id="2.5.1.19"/>
    </reaction>
    <physiologicalReaction direction="left-to-right" evidence="1">
        <dbReference type="Rhea" id="RHEA:21257"/>
    </physiologicalReaction>
</comment>
<comment type="pathway">
    <text evidence="1">Metabolic intermediate biosynthesis; chorismate biosynthesis; chorismate from D-erythrose 4-phosphate and phosphoenolpyruvate: step 6/7.</text>
</comment>
<comment type="subunit">
    <text evidence="1">Monomer.</text>
</comment>
<comment type="subcellular location">
    <subcellularLocation>
        <location evidence="1">Cytoplasm</location>
    </subcellularLocation>
</comment>
<comment type="similarity">
    <text evidence="1">Belongs to the EPSP synthase family.</text>
</comment>
<keyword id="KW-0028">Amino-acid biosynthesis</keyword>
<keyword id="KW-0057">Aromatic amino acid biosynthesis</keyword>
<keyword id="KW-0963">Cytoplasm</keyword>
<keyword id="KW-0808">Transferase</keyword>
<accession>Q8VP65</accession>
<feature type="chain" id="PRO_0000088279" description="3-phosphoshikimate 1-carboxyvinyltransferase">
    <location>
        <begin position="1"/>
        <end position="426"/>
    </location>
</feature>
<feature type="active site" description="Proton acceptor" evidence="1">
    <location>
        <position position="314"/>
    </location>
</feature>
<feature type="binding site" evidence="1">
    <location>
        <position position="22"/>
    </location>
    <ligand>
        <name>3-phosphoshikimate</name>
        <dbReference type="ChEBI" id="CHEBI:145989"/>
    </ligand>
</feature>
<feature type="binding site" evidence="1">
    <location>
        <position position="22"/>
    </location>
    <ligand>
        <name>phosphoenolpyruvate</name>
        <dbReference type="ChEBI" id="CHEBI:58702"/>
    </ligand>
</feature>
<feature type="binding site" evidence="1">
    <location>
        <position position="23"/>
    </location>
    <ligand>
        <name>3-phosphoshikimate</name>
        <dbReference type="ChEBI" id="CHEBI:145989"/>
    </ligand>
</feature>
<feature type="binding site" evidence="1">
    <location>
        <position position="27"/>
    </location>
    <ligand>
        <name>3-phosphoshikimate</name>
        <dbReference type="ChEBI" id="CHEBI:145989"/>
    </ligand>
</feature>
<feature type="binding site" evidence="1">
    <location>
        <position position="96"/>
    </location>
    <ligand>
        <name>phosphoenolpyruvate</name>
        <dbReference type="ChEBI" id="CHEBI:58702"/>
    </ligand>
</feature>
<feature type="binding site" evidence="1">
    <location>
        <position position="124"/>
    </location>
    <ligand>
        <name>phosphoenolpyruvate</name>
        <dbReference type="ChEBI" id="CHEBI:58702"/>
    </ligand>
</feature>
<feature type="binding site" evidence="1">
    <location>
        <position position="170"/>
    </location>
    <ligand>
        <name>3-phosphoshikimate</name>
        <dbReference type="ChEBI" id="CHEBI:145989"/>
    </ligand>
</feature>
<feature type="binding site" evidence="1">
    <location>
        <position position="171"/>
    </location>
    <ligand>
        <name>3-phosphoshikimate</name>
        <dbReference type="ChEBI" id="CHEBI:145989"/>
    </ligand>
</feature>
<feature type="binding site" evidence="1">
    <location>
        <position position="172"/>
    </location>
    <ligand>
        <name>3-phosphoshikimate</name>
        <dbReference type="ChEBI" id="CHEBI:145989"/>
    </ligand>
</feature>
<feature type="binding site" evidence="1">
    <location>
        <position position="172"/>
    </location>
    <ligand>
        <name>phosphoenolpyruvate</name>
        <dbReference type="ChEBI" id="CHEBI:58702"/>
    </ligand>
</feature>
<feature type="binding site" evidence="1">
    <location>
        <position position="198"/>
    </location>
    <ligand>
        <name>3-phosphoshikimate</name>
        <dbReference type="ChEBI" id="CHEBI:145989"/>
    </ligand>
</feature>
<feature type="binding site" evidence="1">
    <location>
        <position position="314"/>
    </location>
    <ligand>
        <name>3-phosphoshikimate</name>
        <dbReference type="ChEBI" id="CHEBI:145989"/>
    </ligand>
</feature>
<feature type="binding site" evidence="1">
    <location>
        <position position="337"/>
    </location>
    <ligand>
        <name>3-phosphoshikimate</name>
        <dbReference type="ChEBI" id="CHEBI:145989"/>
    </ligand>
</feature>
<feature type="binding site" evidence="1">
    <location>
        <position position="341"/>
    </location>
    <ligand>
        <name>3-phosphoshikimate</name>
        <dbReference type="ChEBI" id="CHEBI:145989"/>
    </ligand>
</feature>
<feature type="binding site" evidence="1">
    <location>
        <position position="345"/>
    </location>
    <ligand>
        <name>phosphoenolpyruvate</name>
        <dbReference type="ChEBI" id="CHEBI:58702"/>
    </ligand>
</feature>
<feature type="binding site" evidence="1">
    <location>
        <position position="387"/>
    </location>
    <ligand>
        <name>phosphoenolpyruvate</name>
        <dbReference type="ChEBI" id="CHEBI:58702"/>
    </ligand>
</feature>
<feature type="binding site" evidence="1">
    <location>
        <position position="412"/>
    </location>
    <ligand>
        <name>phosphoenolpyruvate</name>
        <dbReference type="ChEBI" id="CHEBI:58702"/>
    </ligand>
</feature>
<organism>
    <name type="scientific">Photobacterium damsela subsp. piscicida</name>
    <name type="common">Pasteurella piscicida</name>
    <dbReference type="NCBI Taxonomy" id="38294"/>
    <lineage>
        <taxon>Bacteria</taxon>
        <taxon>Pseudomonadati</taxon>
        <taxon>Pseudomonadota</taxon>
        <taxon>Gammaproteobacteria</taxon>
        <taxon>Vibrionales</taxon>
        <taxon>Vibrionaceae</taxon>
        <taxon>Photobacterium</taxon>
    </lineage>
</organism>
<dbReference type="EC" id="2.5.1.19" evidence="1"/>
<dbReference type="EMBL" id="AY066024">
    <property type="protein sequence ID" value="AAL47682.1"/>
    <property type="molecule type" value="Genomic_DNA"/>
</dbReference>
<dbReference type="RefSeq" id="WP_044175364.1">
    <property type="nucleotide sequence ID" value="NZ_SUMH01000324.1"/>
</dbReference>
<dbReference type="SMR" id="Q8VP65"/>
<dbReference type="UniPathway" id="UPA00053">
    <property type="reaction ID" value="UER00089"/>
</dbReference>
<dbReference type="GO" id="GO:0005737">
    <property type="term" value="C:cytoplasm"/>
    <property type="evidence" value="ECO:0007669"/>
    <property type="project" value="UniProtKB-SubCell"/>
</dbReference>
<dbReference type="GO" id="GO:0003866">
    <property type="term" value="F:3-phosphoshikimate 1-carboxyvinyltransferase activity"/>
    <property type="evidence" value="ECO:0007669"/>
    <property type="project" value="UniProtKB-UniRule"/>
</dbReference>
<dbReference type="GO" id="GO:0008652">
    <property type="term" value="P:amino acid biosynthetic process"/>
    <property type="evidence" value="ECO:0007669"/>
    <property type="project" value="UniProtKB-KW"/>
</dbReference>
<dbReference type="GO" id="GO:0009073">
    <property type="term" value="P:aromatic amino acid family biosynthetic process"/>
    <property type="evidence" value="ECO:0007669"/>
    <property type="project" value="UniProtKB-KW"/>
</dbReference>
<dbReference type="GO" id="GO:0009423">
    <property type="term" value="P:chorismate biosynthetic process"/>
    <property type="evidence" value="ECO:0007669"/>
    <property type="project" value="UniProtKB-UniRule"/>
</dbReference>
<dbReference type="CDD" id="cd01556">
    <property type="entry name" value="EPSP_synthase"/>
    <property type="match status" value="1"/>
</dbReference>
<dbReference type="FunFam" id="3.65.10.10:FF:000003">
    <property type="entry name" value="3-phosphoshikimate 1-carboxyvinyltransferase"/>
    <property type="match status" value="1"/>
</dbReference>
<dbReference type="FunFam" id="3.65.10.10:FF:000004">
    <property type="entry name" value="3-phosphoshikimate 1-carboxyvinyltransferase"/>
    <property type="match status" value="1"/>
</dbReference>
<dbReference type="Gene3D" id="3.65.10.10">
    <property type="entry name" value="Enolpyruvate transferase domain"/>
    <property type="match status" value="2"/>
</dbReference>
<dbReference type="HAMAP" id="MF_00210">
    <property type="entry name" value="EPSP_synth"/>
    <property type="match status" value="1"/>
</dbReference>
<dbReference type="InterPro" id="IPR001986">
    <property type="entry name" value="Enolpyruvate_Tfrase_dom"/>
</dbReference>
<dbReference type="InterPro" id="IPR036968">
    <property type="entry name" value="Enolpyruvate_Tfrase_sf"/>
</dbReference>
<dbReference type="InterPro" id="IPR006264">
    <property type="entry name" value="EPSP_synthase"/>
</dbReference>
<dbReference type="InterPro" id="IPR023193">
    <property type="entry name" value="EPSP_synthase_CS"/>
</dbReference>
<dbReference type="InterPro" id="IPR013792">
    <property type="entry name" value="RNA3'P_cycl/enolpyr_Trfase_a/b"/>
</dbReference>
<dbReference type="NCBIfam" id="TIGR01356">
    <property type="entry name" value="aroA"/>
    <property type="match status" value="1"/>
</dbReference>
<dbReference type="PANTHER" id="PTHR21090">
    <property type="entry name" value="AROM/DEHYDROQUINATE SYNTHASE"/>
    <property type="match status" value="1"/>
</dbReference>
<dbReference type="PANTHER" id="PTHR21090:SF5">
    <property type="entry name" value="PENTAFUNCTIONAL AROM POLYPEPTIDE"/>
    <property type="match status" value="1"/>
</dbReference>
<dbReference type="Pfam" id="PF00275">
    <property type="entry name" value="EPSP_synthase"/>
    <property type="match status" value="1"/>
</dbReference>
<dbReference type="PIRSF" id="PIRSF000505">
    <property type="entry name" value="EPSPS"/>
    <property type="match status" value="1"/>
</dbReference>
<dbReference type="SUPFAM" id="SSF55205">
    <property type="entry name" value="EPT/RTPC-like"/>
    <property type="match status" value="1"/>
</dbReference>
<dbReference type="PROSITE" id="PS00104">
    <property type="entry name" value="EPSP_SYNTHASE_1"/>
    <property type="match status" value="1"/>
</dbReference>
<dbReference type="PROSITE" id="PS00885">
    <property type="entry name" value="EPSP_SYNTHASE_2"/>
    <property type="match status" value="1"/>
</dbReference>
<sequence length="426" mass="46236">MESLTLQPINLINGEVNLPGSKSVSNRALLLAALAQGTTRLTNLLDSDDIRHMLNALQQLGVQYQLSADKTECTVEGLGQPFSVKDFTCLYLGNAGTAMRPLAAALCLGQGEFELTGEPRMKERPIGHLVDALRSAGADITYLENEHYPPLKIKGTGLDGGEVSIDGSISSQFLTAFLMAAPLAKSDTTILIKGDLVSKPYIDITLNIMAQFGVQVENQNYQKFIVPAGQVYQSPGEFLVEGDASSASYFLAAGAIKGGEVKVTGIGKNSIQGDIQFADALEAMGAEIEWGEDYIIARHRQLNAIDMDFNHIPDAAMTIATAALFAPGTTSIRNVYNWRVKETDRLHAMATELRKLGAEVEEGDDYITITSPTQLKHVAIDTYDDHRMAMCFSLVALSDTAVTINDPKCTSKTFPDYFTKLEQLSR</sequence>
<proteinExistence type="inferred from homology"/>
<protein>
    <recommendedName>
        <fullName evidence="1">3-phosphoshikimate 1-carboxyvinyltransferase</fullName>
        <ecNumber evidence="1">2.5.1.19</ecNumber>
    </recommendedName>
    <alternativeName>
        <fullName evidence="1">5-enolpyruvylshikimate-3-phosphate synthase</fullName>
        <shortName evidence="1">EPSP synthase</shortName>
        <shortName evidence="1">EPSPS</shortName>
    </alternativeName>
</protein>
<evidence type="ECO:0000255" key="1">
    <source>
        <dbReference type="HAMAP-Rule" id="MF_00210"/>
    </source>
</evidence>